<accession>A7FFS5</accession>
<protein>
    <recommendedName>
        <fullName evidence="1">Autonomous glycyl radical cofactor</fullName>
    </recommendedName>
</protein>
<sequence>MITGIQITKANNEALLNSFWLLDDEKAELRCVCAKSGYAEDQIVPTSELGEIEYREVPLEVQPTVRVEGGQHLNVNVLSRDTLEDAVKNPEKYPQLTIRVSGYAVRFNSLTPEQQRDVITRTFTESL</sequence>
<dbReference type="EMBL" id="CP000720">
    <property type="protein sequence ID" value="ABS47892.1"/>
    <property type="molecule type" value="Genomic_DNA"/>
</dbReference>
<dbReference type="RefSeq" id="WP_002209664.1">
    <property type="nucleotide sequence ID" value="NC_009708.1"/>
</dbReference>
<dbReference type="SMR" id="A7FFS5"/>
<dbReference type="GeneID" id="57975986"/>
<dbReference type="KEGG" id="ypi:YpsIP31758_1122"/>
<dbReference type="HOGENOM" id="CLU_133780_0_0_6"/>
<dbReference type="Proteomes" id="UP000002412">
    <property type="component" value="Chromosome"/>
</dbReference>
<dbReference type="GO" id="GO:0005829">
    <property type="term" value="C:cytosol"/>
    <property type="evidence" value="ECO:0007669"/>
    <property type="project" value="TreeGrafter"/>
</dbReference>
<dbReference type="GO" id="GO:0008861">
    <property type="term" value="F:formate C-acetyltransferase activity"/>
    <property type="evidence" value="ECO:0007669"/>
    <property type="project" value="TreeGrafter"/>
</dbReference>
<dbReference type="FunFam" id="3.20.70.20:FF:000002">
    <property type="entry name" value="Autonomous glycyl radical cofactor"/>
    <property type="match status" value="1"/>
</dbReference>
<dbReference type="Gene3D" id="3.20.70.20">
    <property type="match status" value="1"/>
</dbReference>
<dbReference type="HAMAP" id="MF_00806">
    <property type="entry name" value="GrcA"/>
    <property type="match status" value="1"/>
</dbReference>
<dbReference type="InterPro" id="IPR050244">
    <property type="entry name" value="Auton_GlycylRad_Cofactor"/>
</dbReference>
<dbReference type="InterPro" id="IPR019777">
    <property type="entry name" value="Form_AcTrfase_GR_CS"/>
</dbReference>
<dbReference type="InterPro" id="IPR001150">
    <property type="entry name" value="Gly_radical"/>
</dbReference>
<dbReference type="InterPro" id="IPR011140">
    <property type="entry name" value="Glycyl_radical_cofactor_GrcA"/>
</dbReference>
<dbReference type="NCBIfam" id="TIGR04365">
    <property type="entry name" value="spare_glycyl"/>
    <property type="match status" value="1"/>
</dbReference>
<dbReference type="PANTHER" id="PTHR30191">
    <property type="entry name" value="FORMATE ACETYLTRANSFERASE"/>
    <property type="match status" value="1"/>
</dbReference>
<dbReference type="PANTHER" id="PTHR30191:SF0">
    <property type="entry name" value="FORMATE ACETYLTRANSFERASE 1"/>
    <property type="match status" value="1"/>
</dbReference>
<dbReference type="Pfam" id="PF01228">
    <property type="entry name" value="Gly_radical"/>
    <property type="match status" value="1"/>
</dbReference>
<dbReference type="PIRSF" id="PIRSF000378">
    <property type="entry name" value="Gly_radicl_yfiD"/>
    <property type="match status" value="1"/>
</dbReference>
<dbReference type="SUPFAM" id="SSF51998">
    <property type="entry name" value="PFL-like glycyl radical enzymes"/>
    <property type="match status" value="1"/>
</dbReference>
<dbReference type="PROSITE" id="PS00850">
    <property type="entry name" value="GLY_RADICAL_1"/>
    <property type="match status" value="1"/>
</dbReference>
<dbReference type="PROSITE" id="PS51149">
    <property type="entry name" value="GLY_RADICAL_2"/>
    <property type="match status" value="1"/>
</dbReference>
<name>GRCA_YERP3</name>
<proteinExistence type="inferred from homology"/>
<gene>
    <name evidence="1" type="primary">grcA</name>
    <name type="ordered locus">YpsIP31758_1122</name>
</gene>
<evidence type="ECO:0000255" key="1">
    <source>
        <dbReference type="HAMAP-Rule" id="MF_00806"/>
    </source>
</evidence>
<feature type="chain" id="PRO_1000083741" description="Autonomous glycyl radical cofactor">
    <location>
        <begin position="1"/>
        <end position="127"/>
    </location>
</feature>
<feature type="domain" description="Glycine radical" evidence="1">
    <location>
        <begin position="5"/>
        <end position="127"/>
    </location>
</feature>
<feature type="modified residue" description="Glycine radical" evidence="1">
    <location>
        <position position="102"/>
    </location>
</feature>
<reference key="1">
    <citation type="journal article" date="2007" name="PLoS Genet.">
        <title>The complete genome sequence of Yersinia pseudotuberculosis IP31758, the causative agent of Far East scarlet-like fever.</title>
        <authorList>
            <person name="Eppinger M."/>
            <person name="Rosovitz M.J."/>
            <person name="Fricke W.F."/>
            <person name="Rasko D.A."/>
            <person name="Kokorina G."/>
            <person name="Fayolle C."/>
            <person name="Lindler L.E."/>
            <person name="Carniel E."/>
            <person name="Ravel J."/>
        </authorList>
    </citation>
    <scope>NUCLEOTIDE SEQUENCE [LARGE SCALE GENOMIC DNA]</scope>
    <source>
        <strain>IP 31758</strain>
    </source>
</reference>
<organism>
    <name type="scientific">Yersinia pseudotuberculosis serotype O:1b (strain IP 31758)</name>
    <dbReference type="NCBI Taxonomy" id="349747"/>
    <lineage>
        <taxon>Bacteria</taxon>
        <taxon>Pseudomonadati</taxon>
        <taxon>Pseudomonadota</taxon>
        <taxon>Gammaproteobacteria</taxon>
        <taxon>Enterobacterales</taxon>
        <taxon>Yersiniaceae</taxon>
        <taxon>Yersinia</taxon>
    </lineage>
</organism>
<comment type="function">
    <text evidence="1">Acts as a radical domain for damaged PFL and possibly other radical proteins.</text>
</comment>
<keyword id="KW-0556">Organic radical</keyword>